<protein>
    <recommendedName>
        <fullName>Dynactin subunit 1</fullName>
    </recommendedName>
    <alternativeName>
        <fullName>150 kDa dynein-associated polypeptide</fullName>
    </alternativeName>
    <alternativeName>
        <fullName>DAP-150</fullName>
        <shortName>DP-150</shortName>
    </alternativeName>
    <alternativeName>
        <fullName>p150-glued</fullName>
    </alternativeName>
</protein>
<gene>
    <name type="primary">Dctn1</name>
</gene>
<reference key="1">
    <citation type="journal article" date="1991" name="Nature">
        <title>Homology of a 150K cytoplasmic dynein-associated polypeptide with the Drosophila gene Glued.</title>
        <authorList>
            <person name="Holzbaur E.L.F."/>
            <person name="Hammarback J.A."/>
            <person name="Paschal B.M."/>
            <person name="Kravit N.G."/>
            <person name="Pfister K.K."/>
            <person name="Vallee R.B."/>
        </authorList>
    </citation>
    <scope>NUCLEOTIDE SEQUENCE [MRNA]</scope>
    <source>
        <strain>Sprague-Dawley</strain>
    </source>
</reference>
<reference key="2">
    <citation type="submission" date="1996-12" db="EMBL/GenBank/DDBJ databases">
        <authorList>
            <person name="Holzbaur E.L.F."/>
            <person name="Hammarback J.A."/>
            <person name="Paschal B.M."/>
            <person name="Kravit N.G."/>
            <person name="Pfister K.K."/>
            <person name="Vallee R.B."/>
        </authorList>
    </citation>
    <scope>SEQUENCE REVISION</scope>
</reference>
<reference key="3">
    <citation type="journal article" date="2012" name="Cell Tissue Res.">
        <title>Tubulin-binding cofactor B is a direct interaction partner of the dynactin subunit p150(Glued).</title>
        <authorList>
            <person name="Kuh G.F."/>
            <person name="Stockmann M."/>
            <person name="Meyer-Ohlendorf M."/>
            <person name="Linta L."/>
            <person name="Proepper C."/>
            <person name="Ludolph A.C."/>
            <person name="Bockmann J."/>
            <person name="Boeckers T.M."/>
            <person name="Liebau S."/>
        </authorList>
    </citation>
    <scope>TISSUE SPECIFICITY</scope>
</reference>
<reference key="4">
    <citation type="journal article" date="2012" name="Nat. Commun.">
        <title>Quantitative maps of protein phosphorylation sites across 14 different rat organs and tissues.</title>
        <authorList>
            <person name="Lundby A."/>
            <person name="Secher A."/>
            <person name="Lage K."/>
            <person name="Nordsborg N.B."/>
            <person name="Dmytriyev A."/>
            <person name="Lundby C."/>
            <person name="Olsen J.V."/>
        </authorList>
    </citation>
    <scope>IDENTIFICATION BY MASS SPECTROMETRY [LARGE SCALE ANALYSIS]</scope>
</reference>
<reference key="5">
    <citation type="journal article" date="2013" name="J. Mol. Biol.">
        <title>Three-dimensional structure of CAP-Gly domain of mammalian dynactin determined by magic angle spinning NMR spectroscopy: conformational plasticity and interactions with end-binding protein EB1.</title>
        <authorList>
            <person name="Yan S."/>
            <person name="Hou G."/>
            <person name="Schwieters C.D."/>
            <person name="Ahmed S."/>
            <person name="Williams J.C."/>
            <person name="Polenova T."/>
        </authorList>
    </citation>
    <scope>STRUCTURE BY NMR OF 19-107</scope>
    <scope>INTERACTION WITH MAPRE1</scope>
    <scope>SUBUNIT</scope>
</reference>
<comment type="function">
    <text evidence="1 3">Part of the dynactin complex that activates the molecular motor dynein for ultra-processive transport along microtubules (By similarity). Plays a key role in dynein-mediated retrograde transport of vesicles and organelles along microtubules by recruiting and tethering dynein to microtubules. Binds to both dynein and microtubules providing a link between specific cargos, microtubules and dynein. Essential for targeting dynein to microtubule plus ends, recruiting dynein to membranous cargos and enhancing dynein processivity (the ability to move along a microtubule for a long distance without falling off the track). Can also act as a brake to slow the dynein motor during motility along the microtubule. Can regulate microtubule stability by promoting microtubule formation, nucleation and polymerization and by inhibiting microtubule catastrophe in neurons. Inhibits microtubule catastrophe by binding both to microtubules and to tubulin, leading to enhanced microtubule stability along the axon. Plays a role in metaphase spindle orientation. Plays a role in centriole cohesion and subdistal appendage organization and function. Its recruitment to the centriole in a KIF3A-dependent manner is essential for the maintenance of centriole cohesion and the formation of subdistal appendage. Also required for microtubule anchoring at the mother centriole. Plays a role in primary cilia formation (By similarity).</text>
</comment>
<comment type="subunit">
    <text evidence="1 2 3 8">Monomer and homodimer (PubMed:23648839). Subunit of dynactin, a multiprotein complex part of a tripartite complex with dynein and a adapter, such as BICDL1, BICD2 or HOOK3. The dynactin complex is built around ACTR1A/ACTB filament and consists of an actin-related filament composed of a shoulder domain, a pointed end and a barbed end. Its length is defined by its flexible shoulder domain. The soulder is composed of 2 DCTN1 subunits, 4 DCTN2 and 2 DCTN3. DCTN1/p150(glued) binds directly to microtubules and to cytoplasmic dynein. The 4 DCNT2 (via N-terminus) bind the ACTR1A filament and act as molecular rulers to determine the length. The pointed end is important for binding dynein-dynactin cargo adapters. Consists of 4 subunits: ACTR10, DCNT4, DCTN5 and DCTN6. The barbed end is composed of a CAPZA1:CAPZB heterodimers, which binds ACTR1A/ACTB filament and dynactin and stabilizes dynactin (By similarity). Interacts with the C-terminus of MAPRE1, MAPRE2 and MAPRE3. Interacts (via C-terminus) with SNX6. Interacts with CLN3, DYNAP, ECPAS and FBXL5. Interacts with MISP; this interaction regulates its distribution at the cell cortex. Interacts with CEP131. Interacts with CEP126. Interacts with CLIP1. Interacts with dynein intermediate chain and dynein heavy chain. Interacts with PLK1 (via POLO-box domain). Interacts with TBCB. Binds preferentially to tyrosinated microtubules than to detyrosinated microtubules. Interacts with PARD6A. Interacts with HPS6 (By similarity). Interacts with KIF3A. Interacts with BICD2 (By similarity). Interacts with DST (isoform 9) (By similarity). Interacts with DST (isoform 1) (By similarity). Identified in a complex with MREG and RILP (By similarity). Interacts with BCCIP (isoform 2/alpha). Interacts with DCDC1 (By similarity). Interacts with AKNA (By similarity). Interacts with DYNC1I2 (By similarity). Interacts with RUFY3 and RUFY4 (By similarity).</text>
</comment>
<comment type="interaction">
    <interactant intactId="EBI-7894970">
        <id>P28023</id>
    </interactant>
    <interactant intactId="EBI-7894970">
        <id>P28023</id>
        <label>Dctn1</label>
    </interactant>
    <organismsDiffer>false</organismsDiffer>
    <experiments>2</experiments>
</comment>
<comment type="subcellular location">
    <subcellularLocation>
        <location evidence="3">Cytoplasm</location>
    </subcellularLocation>
    <subcellularLocation>
        <location evidence="3">Cytoplasm</location>
        <location evidence="3">Cytoskeleton</location>
    </subcellularLocation>
    <subcellularLocation>
        <location evidence="3">Cytoplasm</location>
        <location evidence="3">Cytoskeleton</location>
        <location evidence="3">Microtubule organizing center</location>
        <location evidence="3">Centrosome</location>
    </subcellularLocation>
    <subcellularLocation>
        <location evidence="3">Cytoplasm</location>
        <location evidence="3">Cytoskeleton</location>
        <location evidence="3">Microtubule organizing center</location>
        <location evidence="3">Centrosome</location>
        <location evidence="3">Centriole</location>
    </subcellularLocation>
    <subcellularLocation>
        <location evidence="3">Cytoplasm</location>
        <location evidence="3">Cytoskeleton</location>
        <location evidence="3">Spindle</location>
    </subcellularLocation>
    <subcellularLocation>
        <location evidence="3">Nucleus envelope</location>
    </subcellularLocation>
    <subcellularLocation>
        <location evidence="3">Cytoplasm</location>
        <location evidence="3">Cell cortex</location>
    </subcellularLocation>
    <text evidence="2 3">Localizes to microtubule plus ends. Localizes preferentially to the ends of tyrosinated microtubules. Localization at centrosome is regulated by SLK-dependent phosphorylation. Localizes to centrosome in a PARKDA-dependent manner. PLK1-mediated phosphorylation at Ser-179 is essential for its localization in the nuclear envelope. Localizes to the subdistal appendage region of the centriole in a KIF3A-dependent manner.</text>
</comment>
<comment type="tissue specificity">
    <text evidence="7">Ubiquitous with a high level expression observed in the brain (at protein level).</text>
</comment>
<comment type="domain">
    <text evidence="3">The CAP-Gly domain is essential for interactions with microtubules and its binding partners and for its motion along the microtubules. Essential for its preferential binding to tyrosinated microtubules and for promoting the sustained interaction of the dynein motor with microtubules.</text>
</comment>
<comment type="PTM">
    <text evidence="3">Ubiquitinated by a SCF complex containing FBXL5, leading to its degradation by the proteasome.</text>
</comment>
<comment type="PTM">
    <text evidence="3">Phosphorylation by SLK at Thr-145, Thr-146 and Thr-147 targets DCTN1 to the centrosome. It is uncertain if SLK phosphorylates all three threonines or one or two of them. PLK1-mediated phosphorylation at Ser-179 is essential for its localization in the nuclear envelope and promotes its dissociation from microtubules during early mitosis and positively regulates nuclear envelope breakdown during prophase.</text>
</comment>
<comment type="similarity">
    <text evidence="9">Belongs to the dynactin 150 kDa subunit family.</text>
</comment>
<dbReference type="EMBL" id="X62160">
    <property type="protein sequence ID" value="CAA44091.1"/>
    <property type="molecule type" value="mRNA"/>
</dbReference>
<dbReference type="PIR" id="S16129">
    <property type="entry name" value="S16129"/>
</dbReference>
<dbReference type="RefSeq" id="NP_077044.1">
    <property type="nucleotide sequence ID" value="NM_024130.1"/>
</dbReference>
<dbReference type="PDB" id="2M02">
    <property type="method" value="NMR"/>
    <property type="chains" value="A=19-107"/>
</dbReference>
<dbReference type="PDB" id="2MPX">
    <property type="method" value="NMR"/>
    <property type="chains" value="C=26-95"/>
</dbReference>
<dbReference type="PDBsum" id="2M02"/>
<dbReference type="PDBsum" id="2MPX"/>
<dbReference type="BMRB" id="P28023"/>
<dbReference type="SMR" id="P28023"/>
<dbReference type="BioGRID" id="247848">
    <property type="interactions" value="7"/>
</dbReference>
<dbReference type="CORUM" id="P28023"/>
<dbReference type="DIP" id="DIP-44817N"/>
<dbReference type="FunCoup" id="P28023">
    <property type="interactions" value="2714"/>
</dbReference>
<dbReference type="IntAct" id="P28023">
    <property type="interactions" value="6"/>
</dbReference>
<dbReference type="MINT" id="P28023"/>
<dbReference type="STRING" id="10116.ENSRNOP00000059076"/>
<dbReference type="GlyGen" id="P28023">
    <property type="glycosylation" value="3 sites, 1 O-linked glycan (1 site)"/>
</dbReference>
<dbReference type="iPTMnet" id="P28023"/>
<dbReference type="PhosphoSitePlus" id="P28023"/>
<dbReference type="jPOST" id="P28023"/>
<dbReference type="PaxDb" id="10116-ENSRNOP00000059076"/>
<dbReference type="PeptideAtlas" id="P28023"/>
<dbReference type="GeneID" id="29167"/>
<dbReference type="KEGG" id="rno:29167"/>
<dbReference type="UCSC" id="RGD:62038">
    <property type="organism name" value="rat"/>
</dbReference>
<dbReference type="AGR" id="RGD:62038"/>
<dbReference type="CTD" id="1639"/>
<dbReference type="RGD" id="62038">
    <property type="gene designation" value="Dctn1"/>
</dbReference>
<dbReference type="eggNOG" id="KOG0971">
    <property type="taxonomic scope" value="Eukaryota"/>
</dbReference>
<dbReference type="InParanoid" id="P28023"/>
<dbReference type="OrthoDB" id="2130750at2759"/>
<dbReference type="PhylomeDB" id="P28023"/>
<dbReference type="Reactome" id="R-RNO-2132295">
    <property type="pathway name" value="MHC class II antigen presentation"/>
</dbReference>
<dbReference type="Reactome" id="R-RNO-2565942">
    <property type="pathway name" value="Regulation of PLK1 Activity at G2/M Transition"/>
</dbReference>
<dbReference type="Reactome" id="R-RNO-3371497">
    <property type="pathway name" value="HSP90 chaperone cycle for steroid hormone receptors (SHR) in the presence of ligand"/>
</dbReference>
<dbReference type="Reactome" id="R-RNO-380259">
    <property type="pathway name" value="Loss of Nlp from mitotic centrosomes"/>
</dbReference>
<dbReference type="Reactome" id="R-RNO-380270">
    <property type="pathway name" value="Recruitment of mitotic centrosome proteins and complexes"/>
</dbReference>
<dbReference type="Reactome" id="R-RNO-380284">
    <property type="pathway name" value="Loss of proteins required for interphase microtubule organization from the centrosome"/>
</dbReference>
<dbReference type="Reactome" id="R-RNO-380320">
    <property type="pathway name" value="Recruitment of NuMA to mitotic centrosomes"/>
</dbReference>
<dbReference type="Reactome" id="R-RNO-5620912">
    <property type="pathway name" value="Anchoring of the basal body to the plasma membrane"/>
</dbReference>
<dbReference type="Reactome" id="R-RNO-6807878">
    <property type="pathway name" value="COPI-mediated anterograde transport"/>
</dbReference>
<dbReference type="Reactome" id="R-RNO-6811436">
    <property type="pathway name" value="COPI-independent Golgi-to-ER retrograde traffic"/>
</dbReference>
<dbReference type="Reactome" id="R-RNO-8854518">
    <property type="pathway name" value="AURKA Activation by TPX2"/>
</dbReference>
<dbReference type="EvolutionaryTrace" id="P28023"/>
<dbReference type="PRO" id="PR:P28023"/>
<dbReference type="Proteomes" id="UP000002494">
    <property type="component" value="Unplaced"/>
</dbReference>
<dbReference type="GO" id="GO:0030424">
    <property type="term" value="C:axon"/>
    <property type="evidence" value="ECO:0000318"/>
    <property type="project" value="GO_Central"/>
</dbReference>
<dbReference type="GO" id="GO:0005938">
    <property type="term" value="C:cell cortex"/>
    <property type="evidence" value="ECO:0000250"/>
    <property type="project" value="UniProtKB"/>
</dbReference>
<dbReference type="GO" id="GO:0099738">
    <property type="term" value="C:cell cortex region"/>
    <property type="evidence" value="ECO:0000250"/>
    <property type="project" value="UniProtKB"/>
</dbReference>
<dbReference type="GO" id="GO:0031252">
    <property type="term" value="C:cell leading edge"/>
    <property type="evidence" value="ECO:0000266"/>
    <property type="project" value="RGD"/>
</dbReference>
<dbReference type="GO" id="GO:0120103">
    <property type="term" value="C:centriolar subdistal appendage"/>
    <property type="evidence" value="ECO:0000266"/>
    <property type="project" value="RGD"/>
</dbReference>
<dbReference type="GO" id="GO:0005814">
    <property type="term" value="C:centriole"/>
    <property type="evidence" value="ECO:0000250"/>
    <property type="project" value="UniProtKB"/>
</dbReference>
<dbReference type="GO" id="GO:0005813">
    <property type="term" value="C:centrosome"/>
    <property type="evidence" value="ECO:0000250"/>
    <property type="project" value="UniProtKB"/>
</dbReference>
<dbReference type="GO" id="GO:0036064">
    <property type="term" value="C:ciliary basal body"/>
    <property type="evidence" value="ECO:0000266"/>
    <property type="project" value="RGD"/>
</dbReference>
<dbReference type="GO" id="GO:0005737">
    <property type="term" value="C:cytoplasm"/>
    <property type="evidence" value="ECO:0000266"/>
    <property type="project" value="RGD"/>
</dbReference>
<dbReference type="GO" id="GO:0005868">
    <property type="term" value="C:cytoplasmic dynein complex"/>
    <property type="evidence" value="ECO:0000314"/>
    <property type="project" value="RGD"/>
</dbReference>
<dbReference type="GO" id="GO:0005829">
    <property type="term" value="C:cytosol"/>
    <property type="evidence" value="ECO:0007669"/>
    <property type="project" value="GOC"/>
</dbReference>
<dbReference type="GO" id="GO:0000776">
    <property type="term" value="C:kinetochore"/>
    <property type="evidence" value="ECO:0000250"/>
    <property type="project" value="UniProtKB"/>
</dbReference>
<dbReference type="GO" id="GO:0005874">
    <property type="term" value="C:microtubule"/>
    <property type="evidence" value="ECO:0000250"/>
    <property type="project" value="UniProtKB"/>
</dbReference>
<dbReference type="GO" id="GO:0005875">
    <property type="term" value="C:microtubule associated complex"/>
    <property type="evidence" value="ECO:0000266"/>
    <property type="project" value="RGD"/>
</dbReference>
<dbReference type="GO" id="GO:0035371">
    <property type="term" value="C:microtubule plus-end"/>
    <property type="evidence" value="ECO:0000250"/>
    <property type="project" value="UniProtKB"/>
</dbReference>
<dbReference type="GO" id="GO:0043005">
    <property type="term" value="C:neuron projection"/>
    <property type="evidence" value="ECO:0000266"/>
    <property type="project" value="RGD"/>
</dbReference>
<dbReference type="GO" id="GO:0043025">
    <property type="term" value="C:neuronal cell body"/>
    <property type="evidence" value="ECO:0000266"/>
    <property type="project" value="RGD"/>
</dbReference>
<dbReference type="GO" id="GO:0005635">
    <property type="term" value="C:nuclear envelope"/>
    <property type="evidence" value="ECO:0000250"/>
    <property type="project" value="UniProtKB"/>
</dbReference>
<dbReference type="GO" id="GO:0032991">
    <property type="term" value="C:protein-containing complex"/>
    <property type="evidence" value="ECO:0000266"/>
    <property type="project" value="RGD"/>
</dbReference>
<dbReference type="GO" id="GO:0030904">
    <property type="term" value="C:retromer complex"/>
    <property type="evidence" value="ECO:0000266"/>
    <property type="project" value="RGD"/>
</dbReference>
<dbReference type="GO" id="GO:0005819">
    <property type="term" value="C:spindle"/>
    <property type="evidence" value="ECO:0000250"/>
    <property type="project" value="UniProtKB"/>
</dbReference>
<dbReference type="GO" id="GO:0000922">
    <property type="term" value="C:spindle pole"/>
    <property type="evidence" value="ECO:0000266"/>
    <property type="project" value="RGD"/>
</dbReference>
<dbReference type="GO" id="GO:0042802">
    <property type="term" value="F:identical protein binding"/>
    <property type="evidence" value="ECO:0000353"/>
    <property type="project" value="IntAct"/>
</dbReference>
<dbReference type="GO" id="GO:0008017">
    <property type="term" value="F:microtubule binding"/>
    <property type="evidence" value="ECO:0000314"/>
    <property type="project" value="RGD"/>
</dbReference>
<dbReference type="GO" id="GO:0060090">
    <property type="term" value="F:molecular adaptor activity"/>
    <property type="evidence" value="ECO:0000269"/>
    <property type="project" value="DisProt"/>
</dbReference>
<dbReference type="GO" id="GO:0019901">
    <property type="term" value="F:protein kinase binding"/>
    <property type="evidence" value="ECO:0000266"/>
    <property type="project" value="RGD"/>
</dbReference>
<dbReference type="GO" id="GO:0015631">
    <property type="term" value="F:tubulin binding"/>
    <property type="evidence" value="ECO:0000250"/>
    <property type="project" value="UniProtKB"/>
</dbReference>
<dbReference type="GO" id="GO:0051301">
    <property type="term" value="P:cell division"/>
    <property type="evidence" value="ECO:0007669"/>
    <property type="project" value="UniProtKB-KW"/>
</dbReference>
<dbReference type="GO" id="GO:0010457">
    <property type="term" value="P:centriole-centriole cohesion"/>
    <property type="evidence" value="ECO:0000250"/>
    <property type="project" value="UniProtKB"/>
</dbReference>
<dbReference type="GO" id="GO:0031122">
    <property type="term" value="P:cytoplasmic microtubule organization"/>
    <property type="evidence" value="ECO:0000250"/>
    <property type="project" value="UniProtKB"/>
</dbReference>
<dbReference type="GO" id="GO:0000132">
    <property type="term" value="P:establishment of mitotic spindle orientation"/>
    <property type="evidence" value="ECO:0000250"/>
    <property type="project" value="UniProtKB"/>
</dbReference>
<dbReference type="GO" id="GO:0032402">
    <property type="term" value="P:melanosome transport"/>
    <property type="evidence" value="ECO:0000266"/>
    <property type="project" value="RGD"/>
</dbReference>
<dbReference type="GO" id="GO:0034454">
    <property type="term" value="P:microtubule anchoring at centrosome"/>
    <property type="evidence" value="ECO:0000250"/>
    <property type="project" value="UniProtKB"/>
</dbReference>
<dbReference type="GO" id="GO:0061744">
    <property type="term" value="P:motor behavior"/>
    <property type="evidence" value="ECO:0000266"/>
    <property type="project" value="RGD"/>
</dbReference>
<dbReference type="GO" id="GO:0007528">
    <property type="term" value="P:neuromuscular junction development"/>
    <property type="evidence" value="ECO:0000266"/>
    <property type="project" value="RGD"/>
</dbReference>
<dbReference type="GO" id="GO:0050905">
    <property type="term" value="P:neuromuscular process"/>
    <property type="evidence" value="ECO:0000266"/>
    <property type="project" value="RGD"/>
</dbReference>
<dbReference type="GO" id="GO:0070050">
    <property type="term" value="P:neuron cellular homeostasis"/>
    <property type="evidence" value="ECO:0000266"/>
    <property type="project" value="RGD"/>
</dbReference>
<dbReference type="GO" id="GO:1990535">
    <property type="term" value="P:neuron projection maintenance"/>
    <property type="evidence" value="ECO:0000266"/>
    <property type="project" value="RGD"/>
</dbReference>
<dbReference type="GO" id="GO:1905515">
    <property type="term" value="P:non-motile cilium assembly"/>
    <property type="evidence" value="ECO:0000250"/>
    <property type="project" value="UniProtKB"/>
</dbReference>
<dbReference type="GO" id="GO:0051081">
    <property type="term" value="P:nuclear membrane disassembly"/>
    <property type="evidence" value="ECO:0000250"/>
    <property type="project" value="UniProtKB"/>
</dbReference>
<dbReference type="GO" id="GO:0007097">
    <property type="term" value="P:nuclear migration"/>
    <property type="evidence" value="ECO:0000318"/>
    <property type="project" value="GO_Central"/>
</dbReference>
<dbReference type="GO" id="GO:0090316">
    <property type="term" value="P:positive regulation of intracellular protein transport"/>
    <property type="evidence" value="ECO:0000250"/>
    <property type="project" value="UniProtKB"/>
</dbReference>
<dbReference type="GO" id="GO:0090063">
    <property type="term" value="P:positive regulation of microtubule nucleation"/>
    <property type="evidence" value="ECO:0000250"/>
    <property type="project" value="UniProtKB"/>
</dbReference>
<dbReference type="GO" id="GO:0031116">
    <property type="term" value="P:positive regulation of microtubule polymerization"/>
    <property type="evidence" value="ECO:0000250"/>
    <property type="project" value="UniProtKB"/>
</dbReference>
<dbReference type="GO" id="GO:1904398">
    <property type="term" value="P:positive regulation of neuromuscular junction development"/>
    <property type="evidence" value="ECO:0000266"/>
    <property type="project" value="RGD"/>
</dbReference>
<dbReference type="GO" id="GO:0060236">
    <property type="term" value="P:regulation of mitotic spindle organization"/>
    <property type="evidence" value="ECO:0000250"/>
    <property type="project" value="UniProtKB"/>
</dbReference>
<dbReference type="GO" id="GO:0042147">
    <property type="term" value="P:retrograde transport, endosome to Golgi"/>
    <property type="evidence" value="ECO:0000266"/>
    <property type="project" value="RGD"/>
</dbReference>
<dbReference type="GO" id="GO:0021517">
    <property type="term" value="P:ventral spinal cord development"/>
    <property type="evidence" value="ECO:0000266"/>
    <property type="project" value="RGD"/>
</dbReference>
<dbReference type="DisProt" id="DP02910"/>
<dbReference type="FunFam" id="2.30.30.190:FF:000003">
    <property type="entry name" value="dynactin subunit 1 isoform X1"/>
    <property type="match status" value="1"/>
</dbReference>
<dbReference type="Gene3D" id="2.30.30.190">
    <property type="entry name" value="CAP Gly-rich-like domain"/>
    <property type="match status" value="1"/>
</dbReference>
<dbReference type="InterPro" id="IPR036859">
    <property type="entry name" value="CAP-Gly_dom_sf"/>
</dbReference>
<dbReference type="InterPro" id="IPR000938">
    <property type="entry name" value="CAP-Gly_domain"/>
</dbReference>
<dbReference type="InterPro" id="IPR022157">
    <property type="entry name" value="Dynactin"/>
</dbReference>
<dbReference type="PANTHER" id="PTHR18916">
    <property type="entry name" value="DYNACTIN 1-RELATED MICROTUBULE-BINDING"/>
    <property type="match status" value="1"/>
</dbReference>
<dbReference type="PANTHER" id="PTHR18916:SF6">
    <property type="entry name" value="DYNACTIN SUBUNIT 1"/>
    <property type="match status" value="1"/>
</dbReference>
<dbReference type="Pfam" id="PF01302">
    <property type="entry name" value="CAP_GLY"/>
    <property type="match status" value="1"/>
</dbReference>
<dbReference type="Pfam" id="PF12455">
    <property type="entry name" value="Dynactin"/>
    <property type="match status" value="1"/>
</dbReference>
<dbReference type="SMART" id="SM01052">
    <property type="entry name" value="CAP_GLY"/>
    <property type="match status" value="1"/>
</dbReference>
<dbReference type="SUPFAM" id="SSF74924">
    <property type="entry name" value="Cap-Gly domain"/>
    <property type="match status" value="1"/>
</dbReference>
<dbReference type="PROSITE" id="PS00845">
    <property type="entry name" value="CAP_GLY_1"/>
    <property type="match status" value="1"/>
</dbReference>
<dbReference type="PROSITE" id="PS50245">
    <property type="entry name" value="CAP_GLY_2"/>
    <property type="match status" value="1"/>
</dbReference>
<sequence>MAQSKRHMYNRTPSGSRMSTEASARPLRVGSRVEVIGKGHRGTVAYVGATLFATGKWVGVILDEAKGKNDGTVQGRKYFTCDEGHGIFVRQSQIQVFEDGADTTSPETPDSSASKILKREGADAAAKTSKLRGLKPKKAPTARKTTTRRPKPTRPASTGVAGPSSSLGPSGSASAGELSSSEPSTPAQTPLAAPIIPTPALTSPGAAPPLPSPSKEEEGLRDQVRDLEEKLETLRLKRSEDKAKLKELEKHKIQLEQVQEWKSKMQEQQADLQRRLKEAKEAKEALEAKERYMEEMADTADAIEMATLDKEMAEERAESLQQEVEALKERVDELTTDLEILKAEIEEKGSDGAASSYQLKQLEEQNARLKDALVRMRDLSSSEKQEHVKLQKLMEKKNQELEVVRQQRERLQEELSQAESTIDELKEQVDAALGAEEMVEMLTDRNLNLEEKVRELRETVGDLEAMNEMNDELQENARETELELREQLDMAGARVREAQKRVEAAQETVADYQQTIKKYRQLTAHLQDVNRELTNQQEASVERQQQPPPETFDFKIKFAETKAHAKAIEMELRQMEVAQANRHMSLLTAFMPDSFLRPGGDHDCVLVLLLMPRLICKAELIRKQAQEKFDLSENCSERPGLRGAAGEQLSFAAGLVYSLSLLQATLHRYEHALSQCSVDVYKKVGSLYPEMSAHERSLDFLIELLHKDQLDETVNVEPLTKAIKYYQHLYSIHLAEQPEESTMQLADHIKFTQSALDCMSVEVGRLRAFLQGGQEATDIALLLRDLETSCSDIRQFCKKIRRRMPGTDAPGIPAALAFGSQVSDTLLDCRKHLTWVVAVLQEVAAAAAQLIAPLAENEGLPVAALEELAFKASEQIYGSPSSSPYECLRQSCSILISTMNKLATAMQEGEYDAERPPSKPPPVEPWPAALRAEITDAEGLGLKLEDRETVIKELKKSLKIKGEELSEANVRLSLLEKKLDSAAKDADERIEKVQTRLEETQTLLRKKEKEFEETMDALQADIDQLEAEKTELKQRLNSQSKRTIEGLRGPPPSGIATLVSGIAGEEQQRGGTPGQAPGALPGPGPVKDSPLLLQQISAMRLHISQLQHENSILRGAQMKASLAALPPLHVAKFSLPPHEGPGGNLLSGALYRKTSQLLEKLNQLSTYTHVVDITRSSPACKSPSAQLMEQVAQLKSLSDTIEKLKDEVLKETVTQRPGATVPTDFATFPSSAFLRAKEEQQDDTVYMGKVTFSCAAGLGQRHRLVLTQEQLHQLHGRLIS</sequence>
<evidence type="ECO:0000250" key="1">
    <source>
        <dbReference type="UniProtKB" id="A0A287B8J2"/>
    </source>
</evidence>
<evidence type="ECO:0000250" key="2">
    <source>
        <dbReference type="UniProtKB" id="O08788"/>
    </source>
</evidence>
<evidence type="ECO:0000250" key="3">
    <source>
        <dbReference type="UniProtKB" id="Q14203"/>
    </source>
</evidence>
<evidence type="ECO:0000255" key="4"/>
<evidence type="ECO:0000255" key="5">
    <source>
        <dbReference type="PROSITE-ProRule" id="PRU00045"/>
    </source>
</evidence>
<evidence type="ECO:0000256" key="6">
    <source>
        <dbReference type="SAM" id="MobiDB-lite"/>
    </source>
</evidence>
<evidence type="ECO:0000269" key="7">
    <source>
    </source>
</evidence>
<evidence type="ECO:0000269" key="8">
    <source>
    </source>
</evidence>
<evidence type="ECO:0000305" key="9"/>
<evidence type="ECO:0007829" key="10">
    <source>
        <dbReference type="PDB" id="2M02"/>
    </source>
</evidence>
<evidence type="ECO:0007829" key="11">
    <source>
        <dbReference type="PDB" id="2MPX"/>
    </source>
</evidence>
<name>DCTN1_RAT</name>
<feature type="chain" id="PRO_0000083520" description="Dynactin subunit 1">
    <location>
        <begin position="1"/>
        <end position="1280"/>
    </location>
</feature>
<feature type="domain" description="CAP-Gly" evidence="5">
    <location>
        <begin position="48"/>
        <end position="90"/>
    </location>
</feature>
<feature type="region of interest" description="Disordered" evidence="6">
    <location>
        <begin position="1"/>
        <end position="26"/>
    </location>
</feature>
<feature type="region of interest" description="Disordered" evidence="6">
    <location>
        <begin position="99"/>
        <end position="223"/>
    </location>
</feature>
<feature type="region of interest" description="Interaction with HPS6" evidence="2">
    <location>
        <begin position="910"/>
        <end position="1280"/>
    </location>
</feature>
<feature type="region of interest" description="Disordered" evidence="6">
    <location>
        <begin position="1064"/>
        <end position="1089"/>
    </location>
</feature>
<feature type="coiled-coil region" evidence="4">
    <location>
        <begin position="214"/>
        <end position="513"/>
    </location>
</feature>
<feature type="coiled-coil region" evidence="4">
    <location>
        <begin position="942"/>
        <end position="1048"/>
    </location>
</feature>
<feature type="coiled-coil region" evidence="4">
    <location>
        <begin position="1184"/>
        <end position="1213"/>
    </location>
</feature>
<feature type="compositionally biased region" description="Polar residues" evidence="6">
    <location>
        <begin position="11"/>
        <end position="22"/>
    </location>
</feature>
<feature type="compositionally biased region" description="Polar residues" evidence="6">
    <location>
        <begin position="102"/>
        <end position="114"/>
    </location>
</feature>
<feature type="compositionally biased region" description="Basic residues" evidence="6">
    <location>
        <begin position="129"/>
        <end position="152"/>
    </location>
</feature>
<feature type="compositionally biased region" description="Low complexity" evidence="6">
    <location>
        <begin position="161"/>
        <end position="205"/>
    </location>
</feature>
<feature type="compositionally biased region" description="Basic and acidic residues" evidence="6">
    <location>
        <begin position="214"/>
        <end position="223"/>
    </location>
</feature>
<feature type="modified residue" description="Phosphothreonine" evidence="3">
    <location>
        <position position="108"/>
    </location>
</feature>
<feature type="modified residue" description="Phosphothreonine" evidence="3">
    <location>
        <position position="145"/>
    </location>
</feature>
<feature type="modified residue" description="Phosphothreonine" evidence="3">
    <location>
        <position position="146"/>
    </location>
</feature>
<feature type="modified residue" description="Phosphothreonine" evidence="3">
    <location>
        <position position="147"/>
    </location>
</feature>
<feature type="modified residue" description="Phosphoserine; by PLK1" evidence="3">
    <location>
        <position position="179"/>
    </location>
</feature>
<feature type="modified residue" description="Phosphoserine; by CDK1" evidence="3">
    <location>
        <position position="212"/>
    </location>
</feature>
<feature type="strand" evidence="10">
    <location>
        <begin position="35"/>
        <end position="38"/>
    </location>
</feature>
<feature type="strand" evidence="10">
    <location>
        <begin position="41"/>
        <end position="48"/>
    </location>
</feature>
<feature type="strand" evidence="10">
    <location>
        <begin position="53"/>
        <end position="55"/>
    </location>
</feature>
<feature type="strand" evidence="10">
    <location>
        <begin position="57"/>
        <end position="64"/>
    </location>
</feature>
<feature type="strand" evidence="11">
    <location>
        <begin position="78"/>
        <end position="80"/>
    </location>
</feature>
<feature type="strand" evidence="10">
    <location>
        <begin position="87"/>
        <end position="89"/>
    </location>
</feature>
<feature type="turn" evidence="10">
    <location>
        <begin position="91"/>
        <end position="93"/>
    </location>
</feature>
<accession>P28023</accession>
<keyword id="KW-0002">3D-structure</keyword>
<keyword id="KW-0131">Cell cycle</keyword>
<keyword id="KW-0132">Cell division</keyword>
<keyword id="KW-0175">Coiled coil</keyword>
<keyword id="KW-0963">Cytoplasm</keyword>
<keyword id="KW-0206">Cytoskeleton</keyword>
<keyword id="KW-0243">Dynein</keyword>
<keyword id="KW-0493">Microtubule</keyword>
<keyword id="KW-0498">Mitosis</keyword>
<keyword id="KW-0539">Nucleus</keyword>
<keyword id="KW-0597">Phosphoprotein</keyword>
<keyword id="KW-1185">Reference proteome</keyword>
<keyword id="KW-0813">Transport</keyword>
<keyword id="KW-0832">Ubl conjugation</keyword>
<organism>
    <name type="scientific">Rattus norvegicus</name>
    <name type="common">Rat</name>
    <dbReference type="NCBI Taxonomy" id="10116"/>
    <lineage>
        <taxon>Eukaryota</taxon>
        <taxon>Metazoa</taxon>
        <taxon>Chordata</taxon>
        <taxon>Craniata</taxon>
        <taxon>Vertebrata</taxon>
        <taxon>Euteleostomi</taxon>
        <taxon>Mammalia</taxon>
        <taxon>Eutheria</taxon>
        <taxon>Euarchontoglires</taxon>
        <taxon>Glires</taxon>
        <taxon>Rodentia</taxon>
        <taxon>Myomorpha</taxon>
        <taxon>Muroidea</taxon>
        <taxon>Muridae</taxon>
        <taxon>Murinae</taxon>
        <taxon>Rattus</taxon>
    </lineage>
</organism>
<proteinExistence type="evidence at protein level"/>